<accession>P43016</accession>
<reference key="1">
    <citation type="journal article" date="1995" name="Res. Microbiol.">
        <title>Nucleotide sequence of iagA and iagB genes involved in invasion of HeLa cells by Salmonella enterica subsp. enterica ser. Typhi.</title>
        <authorList>
            <person name="Miras I."/>
            <person name="Hermant D."/>
            <person name="Arricau N."/>
            <person name="Popoff M.Y."/>
        </authorList>
    </citation>
    <scope>NUCLEOTIDE SEQUENCE [GENOMIC DNA]</scope>
    <source>
        <strain>ATCC 700931 / Ty2</strain>
    </source>
</reference>
<reference key="2">
    <citation type="journal article" date="2001" name="Nature">
        <title>Complete genome sequence of a multiple drug resistant Salmonella enterica serovar Typhi CT18.</title>
        <authorList>
            <person name="Parkhill J."/>
            <person name="Dougan G."/>
            <person name="James K.D."/>
            <person name="Thomson N.R."/>
            <person name="Pickard D."/>
            <person name="Wain J."/>
            <person name="Churcher C.M."/>
            <person name="Mungall K.L."/>
            <person name="Bentley S.D."/>
            <person name="Holden M.T.G."/>
            <person name="Sebaihia M."/>
            <person name="Baker S."/>
            <person name="Basham D."/>
            <person name="Brooks K."/>
            <person name="Chillingworth T."/>
            <person name="Connerton P."/>
            <person name="Cronin A."/>
            <person name="Davis P."/>
            <person name="Davies R.M."/>
            <person name="Dowd L."/>
            <person name="White N."/>
            <person name="Farrar J."/>
            <person name="Feltwell T."/>
            <person name="Hamlin N."/>
            <person name="Haque A."/>
            <person name="Hien T.T."/>
            <person name="Holroyd S."/>
            <person name="Jagels K."/>
            <person name="Krogh A."/>
            <person name="Larsen T.S."/>
            <person name="Leather S."/>
            <person name="Moule S."/>
            <person name="O'Gaora P."/>
            <person name="Parry C."/>
            <person name="Quail M.A."/>
            <person name="Rutherford K.M."/>
            <person name="Simmonds M."/>
            <person name="Skelton J."/>
            <person name="Stevens K."/>
            <person name="Whitehead S."/>
            <person name="Barrell B.G."/>
        </authorList>
    </citation>
    <scope>NUCLEOTIDE SEQUENCE [LARGE SCALE GENOMIC DNA]</scope>
    <source>
        <strain>CT18</strain>
    </source>
</reference>
<reference key="3">
    <citation type="journal article" date="2003" name="J. Bacteriol.">
        <title>Comparative genomics of Salmonella enterica serovar Typhi strains Ty2 and CT18.</title>
        <authorList>
            <person name="Deng W."/>
            <person name="Liou S.-R."/>
            <person name="Plunkett G. III"/>
            <person name="Mayhew G.F."/>
            <person name="Rose D.J."/>
            <person name="Burland V."/>
            <person name="Kodoyianni V."/>
            <person name="Schwartz D.C."/>
            <person name="Blattner F.R."/>
        </authorList>
    </citation>
    <scope>NUCLEOTIDE SEQUENCE [LARGE SCALE GENOMIC DNA]</scope>
    <source>
        <strain>ATCC 700931 / Ty2</strain>
    </source>
</reference>
<organism>
    <name type="scientific">Salmonella typhi</name>
    <dbReference type="NCBI Taxonomy" id="90370"/>
    <lineage>
        <taxon>Bacteria</taxon>
        <taxon>Pseudomonadati</taxon>
        <taxon>Pseudomonadota</taxon>
        <taxon>Gammaproteobacteria</taxon>
        <taxon>Enterobacterales</taxon>
        <taxon>Enterobacteriaceae</taxon>
        <taxon>Salmonella</taxon>
    </lineage>
</organism>
<sequence length="553" mass="63040">MPHFNPVPVSNKKFVFDDFILNMDGSLLRSEKKVNIPPKEYAVLVILLEAAGKIVSKNTLLDQVWGDAEVNEESLTRCIYALRRILSEDKEHRYIETLYGQGYRFNRPVVVVSPPAPQPTTHTLAILPFQMQDQVQSESLHYSIVKGLSQYAPFGLSVLPVTITKNCRSVKDILELMDQLRPDYYISGQMIPDGNDNIVQIEIVRVKGYHLLHQESIKLIEHQPASLLQNKIANLLLRCIPGLRWDTKQISELNSIDSTMVYLRGKHELNQYTPYSLQQALKLLTQCVNMSPNSIAPYCALAECYLSMAQMGIFDKQNAMIKAKEHAIKATELDHNNPQALGLLGLINTIHSEYIVGSLLFKQANLLSPISADIKYYYGWNLFMAGQLEEALQTINECLKLDPTRAAAGITKLWITYYHTGIDDAIRLGDELRSQHLQDNPILLSMQVMFLSLKGKHELARKLTKEISTQEITGLIAVNLLYAEYCQNSERALPTIREFLESEQRIDNNPGLLPLVLVAHGEAIAEKMWNKFKNEDNIWFKRWKQDPRLIKLR</sequence>
<name>HILA_SALTI</name>
<comment type="function">
    <text evidence="1">The main transcriptional regulator of the Salmonella pathogenicity island 1 (SPI1) gene expression. Activates the expression of invasion genes by a direct action at their promoters and also indirectly by increasing the level of invF. Also binds upstream of prgH and directly activates the expression of prgHIJK operon (By similarity).</text>
</comment>
<comment type="induction">
    <text evidence="1">Expressed in response to both environmental conditions and genetic regulatory factors. Transcription is subject to complex control and is stimulated by the SPI1-encoded HilC and HilD (By similarity).</text>
</comment>
<dbReference type="EMBL" id="X80892">
    <property type="protein sequence ID" value="CAA56853.1"/>
    <property type="molecule type" value="Genomic_DNA"/>
</dbReference>
<dbReference type="EMBL" id="AL513382">
    <property type="protein sequence ID" value="CAD05983.1"/>
    <property type="molecule type" value="Genomic_DNA"/>
</dbReference>
<dbReference type="EMBL" id="AE014613">
    <property type="protein sequence ID" value="AAO70339.1"/>
    <property type="molecule type" value="Genomic_DNA"/>
</dbReference>
<dbReference type="RefSeq" id="NP_457270.1">
    <property type="nucleotide sequence ID" value="NC_003198.1"/>
</dbReference>
<dbReference type="RefSeq" id="WP_001120092.1">
    <property type="nucleotide sequence ID" value="NZ_WSUR01000005.1"/>
</dbReference>
<dbReference type="SMR" id="P43016"/>
<dbReference type="STRING" id="220341.gene:17586893"/>
<dbReference type="KEGG" id="stt:t2778"/>
<dbReference type="KEGG" id="sty:STY2999"/>
<dbReference type="PATRIC" id="fig|220341.7.peg.3053"/>
<dbReference type="eggNOG" id="COG0457">
    <property type="taxonomic scope" value="Bacteria"/>
</dbReference>
<dbReference type="eggNOG" id="COG3710">
    <property type="taxonomic scope" value="Bacteria"/>
</dbReference>
<dbReference type="HOGENOM" id="CLU_034088_0_0_6"/>
<dbReference type="OMA" id="AGIAEMW"/>
<dbReference type="OrthoDB" id="6593698at2"/>
<dbReference type="Proteomes" id="UP000000541">
    <property type="component" value="Chromosome"/>
</dbReference>
<dbReference type="Proteomes" id="UP000002670">
    <property type="component" value="Chromosome"/>
</dbReference>
<dbReference type="GO" id="GO:0003677">
    <property type="term" value="F:DNA binding"/>
    <property type="evidence" value="ECO:0007669"/>
    <property type="project" value="UniProtKB-KW"/>
</dbReference>
<dbReference type="GO" id="GO:0000160">
    <property type="term" value="P:phosphorelay signal transduction system"/>
    <property type="evidence" value="ECO:0007669"/>
    <property type="project" value="UniProtKB-KW"/>
</dbReference>
<dbReference type="GO" id="GO:0006355">
    <property type="term" value="P:regulation of DNA-templated transcription"/>
    <property type="evidence" value="ECO:0007669"/>
    <property type="project" value="InterPro"/>
</dbReference>
<dbReference type="CDD" id="cd00383">
    <property type="entry name" value="trans_reg_C"/>
    <property type="match status" value="1"/>
</dbReference>
<dbReference type="Gene3D" id="1.25.40.10">
    <property type="entry name" value="Tetratricopeptide repeat domain"/>
    <property type="match status" value="1"/>
</dbReference>
<dbReference type="Gene3D" id="1.10.10.10">
    <property type="entry name" value="Winged helix-like DNA-binding domain superfamily/Winged helix DNA-binding domain"/>
    <property type="match status" value="1"/>
</dbReference>
<dbReference type="InterPro" id="IPR001867">
    <property type="entry name" value="OmpR/PhoB-type_DNA-bd"/>
</dbReference>
<dbReference type="InterPro" id="IPR016032">
    <property type="entry name" value="Sig_transdc_resp-reg_C-effctor"/>
</dbReference>
<dbReference type="InterPro" id="IPR011990">
    <property type="entry name" value="TPR-like_helical_dom_sf"/>
</dbReference>
<dbReference type="InterPro" id="IPR019734">
    <property type="entry name" value="TPR_rpt"/>
</dbReference>
<dbReference type="InterPro" id="IPR036388">
    <property type="entry name" value="WH-like_DNA-bd_sf"/>
</dbReference>
<dbReference type="NCBIfam" id="NF009037">
    <property type="entry name" value="PRK12370.1"/>
    <property type="match status" value="1"/>
</dbReference>
<dbReference type="Pfam" id="PF00486">
    <property type="entry name" value="Trans_reg_C"/>
    <property type="match status" value="1"/>
</dbReference>
<dbReference type="SMART" id="SM00862">
    <property type="entry name" value="Trans_reg_C"/>
    <property type="match status" value="1"/>
</dbReference>
<dbReference type="SUPFAM" id="SSF46894">
    <property type="entry name" value="C-terminal effector domain of the bipartite response regulators"/>
    <property type="match status" value="1"/>
</dbReference>
<dbReference type="SUPFAM" id="SSF48452">
    <property type="entry name" value="TPR-like"/>
    <property type="match status" value="1"/>
</dbReference>
<dbReference type="PROSITE" id="PS51755">
    <property type="entry name" value="OMPR_PHOB"/>
    <property type="match status" value="1"/>
</dbReference>
<dbReference type="PROSITE" id="PS50005">
    <property type="entry name" value="TPR"/>
    <property type="match status" value="1"/>
</dbReference>
<dbReference type="PROSITE" id="PS50293">
    <property type="entry name" value="TPR_REGION"/>
    <property type="match status" value="1"/>
</dbReference>
<proteinExistence type="inferred from homology"/>
<keyword id="KW-0010">Activator</keyword>
<keyword id="KW-0238">DNA-binding</keyword>
<keyword id="KW-0597">Phosphoprotein</keyword>
<keyword id="KW-0802">TPR repeat</keyword>
<keyword id="KW-0804">Transcription</keyword>
<keyword id="KW-0805">Transcription regulation</keyword>
<keyword id="KW-0902">Two-component regulatory system</keyword>
<keyword id="KW-0843">Virulence</keyword>
<feature type="chain" id="PRO_0000081107" description="Transcriptional regulator HilA">
    <location>
        <begin position="1"/>
        <end position="553"/>
    </location>
</feature>
<feature type="repeat" description="TPR">
    <location>
        <begin position="372"/>
        <end position="405"/>
    </location>
</feature>
<feature type="DNA-binding region" description="OmpR/PhoB-type" evidence="2">
    <location>
        <begin position="11"/>
        <end position="107"/>
    </location>
</feature>
<feature type="modified residue" description="4-aspartylphosphate" evidence="1">
    <location>
        <position position="62"/>
    </location>
</feature>
<feature type="sequence conflict" description="In Ref. 1; CAA56853." evidence="3" ref="1">
    <original>L</original>
    <variation>V</variation>
    <location>
        <position position="28"/>
    </location>
</feature>
<evidence type="ECO:0000250" key="1"/>
<evidence type="ECO:0000255" key="2">
    <source>
        <dbReference type="PROSITE-ProRule" id="PRU01091"/>
    </source>
</evidence>
<evidence type="ECO:0000305" key="3"/>
<gene>
    <name type="primary">hilA</name>
    <name type="synonym">iagA</name>
    <name type="ordered locus">STY2999</name>
    <name type="ordered locus">t2778</name>
</gene>
<protein>
    <recommendedName>
        <fullName>Transcriptional regulator HilA</fullName>
        <shortName>Protein IagA</shortName>
    </recommendedName>
</protein>